<protein>
    <recommendedName>
        <fullName>Neuronal acetylcholine receptor subunit alpha-6</fullName>
    </recommendedName>
</protein>
<reference key="1">
    <citation type="journal article" date="2004" name="Cell">
        <title>Accelerated evolution of nervous system genes in the origin of Homo sapiens.</title>
        <authorList>
            <person name="Dorus S."/>
            <person name="Vallender E.J."/>
            <person name="Evans P.D."/>
            <person name="Anderson J.R."/>
            <person name="Gilbert S.L."/>
            <person name="Mahowald M."/>
            <person name="Wyckoff G.J."/>
            <person name="Malcom C.M."/>
            <person name="Lahn B.T."/>
        </authorList>
    </citation>
    <scope>NUCLEOTIDE SEQUENCE [MRNA]</scope>
</reference>
<organism>
    <name type="scientific">Pan troglodytes</name>
    <name type="common">Chimpanzee</name>
    <dbReference type="NCBI Taxonomy" id="9598"/>
    <lineage>
        <taxon>Eukaryota</taxon>
        <taxon>Metazoa</taxon>
        <taxon>Chordata</taxon>
        <taxon>Craniata</taxon>
        <taxon>Vertebrata</taxon>
        <taxon>Euteleostomi</taxon>
        <taxon>Mammalia</taxon>
        <taxon>Eutheria</taxon>
        <taxon>Euarchontoglires</taxon>
        <taxon>Primates</taxon>
        <taxon>Haplorrhini</taxon>
        <taxon>Catarrhini</taxon>
        <taxon>Hominidae</taxon>
        <taxon>Pan</taxon>
    </lineage>
</organism>
<proteinExistence type="evidence at transcript level"/>
<evidence type="ECO:0000250" key="1"/>
<evidence type="ECO:0000250" key="2">
    <source>
        <dbReference type="UniProtKB" id="P02709"/>
    </source>
</evidence>
<evidence type="ECO:0000250" key="3">
    <source>
        <dbReference type="UniProtKB" id="P04757"/>
    </source>
</evidence>
<evidence type="ECO:0000250" key="4">
    <source>
        <dbReference type="UniProtKB" id="P43681"/>
    </source>
</evidence>
<evidence type="ECO:0000250" key="5">
    <source>
        <dbReference type="UniProtKB" id="Q15825"/>
    </source>
</evidence>
<evidence type="ECO:0000250" key="6">
    <source>
        <dbReference type="UniProtKB" id="Q9R0W9"/>
    </source>
</evidence>
<evidence type="ECO:0000255" key="7"/>
<evidence type="ECO:0000305" key="8"/>
<comment type="function">
    <text evidence="5 6">Component of neuronal acetylcholine receptors (nAChRs) that function as pentameric, ligand-gated cation channels with high calcium permeability among other activities. nAChRs are excitatory neurotrasnmitter receptors formed by a collection of nAChR subunits known to mediate synaptic transmission in the nervous system and the neuromuscular junction. Each nAchR subunit confers differential attributes to channel properties, including activation, deactivation and desensitization kinetics, pH sensitivity, cation permeability, and binding to allosteric modulators. CHRNA6 forms pentameric channels with CHRNB2, CHRNB3 and CHRNA4 that exhibit high sensitivity to ACh and nicotine and are predominantly expressed in only a few brain areas, including dopaminergic neurons, norepirephrine neurons and cells of the visual system. nAChrs containing CHRNA6 subunits mediate endogenous cholinergic modulation of dopamine and gamma-aminobutyric acid (GABA) release in response to nicotine at nerve terminals.</text>
</comment>
<comment type="catalytic activity">
    <reaction evidence="4">
        <text>Ca(2+)(in) = Ca(2+)(out)</text>
        <dbReference type="Rhea" id="RHEA:29671"/>
        <dbReference type="ChEBI" id="CHEBI:29108"/>
    </reaction>
</comment>
<comment type="catalytic activity">
    <reaction evidence="2">
        <text>K(+)(in) = K(+)(out)</text>
        <dbReference type="Rhea" id="RHEA:29463"/>
        <dbReference type="ChEBI" id="CHEBI:29103"/>
    </reaction>
</comment>
<comment type="catalytic activity">
    <reaction evidence="2">
        <text>Na(+)(in) = Na(+)(out)</text>
        <dbReference type="Rhea" id="RHEA:34963"/>
        <dbReference type="ChEBI" id="CHEBI:29101"/>
    </reaction>
</comment>
<comment type="activity regulation">
    <text evidence="6">Activated by a myriad of ligands such as acetylcholine, cytisine and nicotine. CHRNA6 nAChR activity is inhibited by the antagonists alpha-conotoxin MII and PIA, a small disulfide-constrained peptides from cone snails.</text>
</comment>
<comment type="subunit">
    <text evidence="5 6">Neuronal AChR is composed of two different types of subunits: alpha and non-alpha (beta). CHRNA6/alpha-6 subunit can be combined to CHRNB2/beta-2, CHRNA4/alpha-4 and CHRNB3/beta-3 to give rise to functional receptors. Heteropentamers containing CHRNB3 have an stoichiometry of (CHRNA6:CHRNB2)2:CHRNB3. Interacts with LYPD6.</text>
</comment>
<comment type="subcellular location">
    <subcellularLocation>
        <location evidence="6">Synaptic cell membrane</location>
        <topology evidence="7">Multi-pass membrane protein</topology>
    </subcellularLocation>
</comment>
<comment type="similarity">
    <text evidence="8">Belongs to the ligand-gated ion channel (TC 1.A.9) family. Acetylcholine receptor (TC 1.A.9.1) subfamily. Alpha-6/CHRNA6 sub-subfamily.</text>
</comment>
<accession>Q5IS76</accession>
<dbReference type="EMBL" id="AY665252">
    <property type="protein sequence ID" value="AAV74290.1"/>
    <property type="molecule type" value="mRNA"/>
</dbReference>
<dbReference type="RefSeq" id="NP_001029266.1">
    <property type="nucleotide sequence ID" value="NM_001034094.1"/>
</dbReference>
<dbReference type="SMR" id="Q5IS76"/>
<dbReference type="STRING" id="9598.ENSPTRP00000034613"/>
<dbReference type="GlyCosmos" id="Q5IS76">
    <property type="glycosylation" value="2 sites, No reported glycans"/>
</dbReference>
<dbReference type="PaxDb" id="9598-ENSPTRP00000034613"/>
<dbReference type="GeneID" id="472750"/>
<dbReference type="KEGG" id="ptr:472750"/>
<dbReference type="CTD" id="8973"/>
<dbReference type="eggNOG" id="KOG3645">
    <property type="taxonomic scope" value="Eukaryota"/>
</dbReference>
<dbReference type="HOGENOM" id="CLU_018074_1_0_1"/>
<dbReference type="InParanoid" id="Q5IS76"/>
<dbReference type="OrthoDB" id="2487at9604"/>
<dbReference type="TreeFam" id="TF315605"/>
<dbReference type="Proteomes" id="UP000002277">
    <property type="component" value="Unplaced"/>
</dbReference>
<dbReference type="GO" id="GO:0005892">
    <property type="term" value="C:acetylcholine-gated channel complex"/>
    <property type="evidence" value="ECO:0000250"/>
    <property type="project" value="UniProtKB"/>
</dbReference>
<dbReference type="GO" id="GO:0098691">
    <property type="term" value="C:dopaminergic synapse"/>
    <property type="evidence" value="ECO:0000250"/>
    <property type="project" value="UniProtKB"/>
</dbReference>
<dbReference type="GO" id="GO:0043005">
    <property type="term" value="C:neuron projection"/>
    <property type="evidence" value="ECO:0000318"/>
    <property type="project" value="GO_Central"/>
</dbReference>
<dbReference type="GO" id="GO:0005886">
    <property type="term" value="C:plasma membrane"/>
    <property type="evidence" value="ECO:0000318"/>
    <property type="project" value="GO_Central"/>
</dbReference>
<dbReference type="GO" id="GO:0045211">
    <property type="term" value="C:postsynaptic membrane"/>
    <property type="evidence" value="ECO:0007669"/>
    <property type="project" value="UniProtKB-KW"/>
</dbReference>
<dbReference type="GO" id="GO:0042734">
    <property type="term" value="C:presynaptic membrane"/>
    <property type="evidence" value="ECO:0000250"/>
    <property type="project" value="UniProtKB"/>
</dbReference>
<dbReference type="GO" id="GO:0045202">
    <property type="term" value="C:synapse"/>
    <property type="evidence" value="ECO:0000318"/>
    <property type="project" value="GO_Central"/>
</dbReference>
<dbReference type="GO" id="GO:0015464">
    <property type="term" value="F:acetylcholine receptor activity"/>
    <property type="evidence" value="ECO:0000250"/>
    <property type="project" value="UniProtKB"/>
</dbReference>
<dbReference type="GO" id="GO:0022848">
    <property type="term" value="F:acetylcholine-gated monoatomic cation-selective channel activity"/>
    <property type="evidence" value="ECO:0000250"/>
    <property type="project" value="UniProtKB"/>
</dbReference>
<dbReference type="GO" id="GO:0095500">
    <property type="term" value="P:acetylcholine receptor signaling pathway"/>
    <property type="evidence" value="ECO:0000318"/>
    <property type="project" value="GO_Central"/>
</dbReference>
<dbReference type="GO" id="GO:0035095">
    <property type="term" value="P:behavioral response to nicotine"/>
    <property type="evidence" value="ECO:0000250"/>
    <property type="project" value="UniProtKB"/>
</dbReference>
<dbReference type="GO" id="GO:0051899">
    <property type="term" value="P:membrane depolarization"/>
    <property type="evidence" value="ECO:0000318"/>
    <property type="project" value="GO_Central"/>
</dbReference>
<dbReference type="GO" id="GO:0034220">
    <property type="term" value="P:monoatomic ion transmembrane transport"/>
    <property type="evidence" value="ECO:0000318"/>
    <property type="project" value="GO_Central"/>
</dbReference>
<dbReference type="GO" id="GO:0007399">
    <property type="term" value="P:nervous system development"/>
    <property type="evidence" value="ECO:0000250"/>
    <property type="project" value="UniProtKB"/>
</dbReference>
<dbReference type="GO" id="GO:0007274">
    <property type="term" value="P:neuromuscular synaptic transmission"/>
    <property type="evidence" value="ECO:0000318"/>
    <property type="project" value="GO_Central"/>
</dbReference>
<dbReference type="GO" id="GO:0014059">
    <property type="term" value="P:regulation of dopamine secretion"/>
    <property type="evidence" value="ECO:0000250"/>
    <property type="project" value="UniProtKB"/>
</dbReference>
<dbReference type="GO" id="GO:0035094">
    <property type="term" value="P:response to nicotine"/>
    <property type="evidence" value="ECO:0000318"/>
    <property type="project" value="GO_Central"/>
</dbReference>
<dbReference type="GO" id="GO:0007165">
    <property type="term" value="P:signal transduction"/>
    <property type="evidence" value="ECO:0000250"/>
    <property type="project" value="UniProtKB"/>
</dbReference>
<dbReference type="GO" id="GO:0060084">
    <property type="term" value="P:synaptic transmission involved in micturition"/>
    <property type="evidence" value="ECO:0000250"/>
    <property type="project" value="UniProtKB"/>
</dbReference>
<dbReference type="GO" id="GO:0007271">
    <property type="term" value="P:synaptic transmission, cholinergic"/>
    <property type="evidence" value="ECO:0000318"/>
    <property type="project" value="GO_Central"/>
</dbReference>
<dbReference type="CDD" id="cd19064">
    <property type="entry name" value="LGIC_TM_nAChR"/>
    <property type="match status" value="1"/>
</dbReference>
<dbReference type="FunFam" id="2.70.170.10:FF:000008">
    <property type="entry name" value="Cholinergic receptor nicotinic alpha 6 subunit"/>
    <property type="match status" value="1"/>
</dbReference>
<dbReference type="FunFam" id="1.20.58.390:FF:000017">
    <property type="entry name" value="Neuronal acetylcholine receptor subunit alpha-3"/>
    <property type="match status" value="1"/>
</dbReference>
<dbReference type="FunFam" id="1.20.58.390:FF:000001">
    <property type="entry name" value="Neuronal nicotinic acetylcholine receptor subunit 3"/>
    <property type="match status" value="1"/>
</dbReference>
<dbReference type="Gene3D" id="2.70.170.10">
    <property type="entry name" value="Neurotransmitter-gated ion-channel ligand-binding domain"/>
    <property type="match status" value="1"/>
</dbReference>
<dbReference type="Gene3D" id="1.20.58.390">
    <property type="entry name" value="Neurotransmitter-gated ion-channel transmembrane domain"/>
    <property type="match status" value="2"/>
</dbReference>
<dbReference type="InterPro" id="IPR006202">
    <property type="entry name" value="Neur_chan_lig-bd"/>
</dbReference>
<dbReference type="InterPro" id="IPR036734">
    <property type="entry name" value="Neur_chan_lig-bd_sf"/>
</dbReference>
<dbReference type="InterPro" id="IPR006201">
    <property type="entry name" value="Neur_channel"/>
</dbReference>
<dbReference type="InterPro" id="IPR036719">
    <property type="entry name" value="Neuro-gated_channel_TM_sf"/>
</dbReference>
<dbReference type="InterPro" id="IPR038050">
    <property type="entry name" value="Neuro_actylchol_rec"/>
</dbReference>
<dbReference type="InterPro" id="IPR006029">
    <property type="entry name" value="Neurotrans-gated_channel_TM"/>
</dbReference>
<dbReference type="InterPro" id="IPR018000">
    <property type="entry name" value="Neurotransmitter_ion_chnl_CS"/>
</dbReference>
<dbReference type="InterPro" id="IPR002394">
    <property type="entry name" value="Nicotinic_acetylcholine_rcpt"/>
</dbReference>
<dbReference type="NCBIfam" id="TIGR00860">
    <property type="entry name" value="LIC"/>
    <property type="match status" value="1"/>
</dbReference>
<dbReference type="PANTHER" id="PTHR18945">
    <property type="entry name" value="NEUROTRANSMITTER GATED ION CHANNEL"/>
    <property type="match status" value="1"/>
</dbReference>
<dbReference type="Pfam" id="PF02931">
    <property type="entry name" value="Neur_chan_LBD"/>
    <property type="match status" value="1"/>
</dbReference>
<dbReference type="Pfam" id="PF02932">
    <property type="entry name" value="Neur_chan_memb"/>
    <property type="match status" value="1"/>
</dbReference>
<dbReference type="PRINTS" id="PR00254">
    <property type="entry name" value="NICOTINICR"/>
</dbReference>
<dbReference type="PRINTS" id="PR00252">
    <property type="entry name" value="NRIONCHANNEL"/>
</dbReference>
<dbReference type="SUPFAM" id="SSF90112">
    <property type="entry name" value="Neurotransmitter-gated ion-channel transmembrane pore"/>
    <property type="match status" value="1"/>
</dbReference>
<dbReference type="SUPFAM" id="SSF63712">
    <property type="entry name" value="Nicotinic receptor ligand binding domain-like"/>
    <property type="match status" value="1"/>
</dbReference>
<dbReference type="PROSITE" id="PS00236">
    <property type="entry name" value="NEUROTR_ION_CHANNEL"/>
    <property type="match status" value="1"/>
</dbReference>
<gene>
    <name type="primary">CHRNA6</name>
</gene>
<sequence length="494" mass="56921">MLTSKGQGFLHGGLCLWLCVFTPFFKGCVGCATEERLFHKLFSHYNQFIRPVENVSDPVTVHFEVAITQLANVDEVNQIMETNLWLRHIWNDYKLRWDPMEYDGIETLRIPADKIWKPDIVLYNNAVGDFQVEGKTKALLKYNGMITWTPPAIFKSSCPMDITFFPFDHQNCSLKFGSWTYDKAEIDLLIIGSKVDMNDFWENSEWEIIDASGYKHDIKYNCCEEIYTDITYSFYIRRLPMFYTINLIIPCLFISFLTVLVFYLPSDCGEKVTLCISVLLSLTVFLLVITETIPSTSLVVPLVGEYLLFTMIFVTLSIVVTVFVLNIHYRTPTTHTMPRWVKTVFLKLLPQVLLMRWPLDKTRGTGSDAVPRGLARRPAKGKLASHGEPRHLKECFHCHKSNELATSKRRLSHHPLQWVVENSEHSPEVEDVINSVQFIAENMKSHNETKEVEDDWKYVAMVVDRVFLWVFIIVCVFGTAGLFLQPLLGNTGKS</sequence>
<name>ACHA6_PANTR</name>
<feature type="signal peptide" evidence="7">
    <location>
        <begin position="1"/>
        <end position="25"/>
    </location>
</feature>
<feature type="chain" id="PRO_0000000362" description="Neuronal acetylcholine receptor subunit alpha-6">
    <location>
        <begin position="26"/>
        <end position="494"/>
    </location>
</feature>
<feature type="topological domain" description="Extracellular">
    <location>
        <begin position="26"/>
        <end position="239"/>
    </location>
</feature>
<feature type="transmembrane region" description="Helical" evidence="7">
    <location>
        <begin position="240"/>
        <end position="264"/>
    </location>
</feature>
<feature type="transmembrane region" description="Helical" evidence="7">
    <location>
        <begin position="272"/>
        <end position="290"/>
    </location>
</feature>
<feature type="transmembrane region" description="Helical" evidence="7">
    <location>
        <begin position="306"/>
        <end position="327"/>
    </location>
</feature>
<feature type="topological domain" description="Cytoplasmic">
    <location>
        <begin position="328"/>
        <end position="465"/>
    </location>
</feature>
<feature type="transmembrane region" description="Helical" evidence="7">
    <location>
        <begin position="466"/>
        <end position="484"/>
    </location>
</feature>
<feature type="modified residue" description="Phosphoserine" evidence="3">
    <location>
        <position position="401"/>
    </location>
</feature>
<feature type="glycosylation site" description="N-linked (GlcNAc...) asparagine" evidence="7">
    <location>
        <position position="54"/>
    </location>
</feature>
<feature type="glycosylation site" description="N-linked (GlcNAc...) asparagine" evidence="7">
    <location>
        <position position="171"/>
    </location>
</feature>
<feature type="disulfide bond" evidence="1">
    <location>
        <begin position="158"/>
        <end position="172"/>
    </location>
</feature>
<feature type="disulfide bond" description="Associated with receptor activation" evidence="1">
    <location>
        <begin position="222"/>
        <end position="223"/>
    </location>
</feature>
<keyword id="KW-1003">Cell membrane</keyword>
<keyword id="KW-1015">Disulfide bond</keyword>
<keyword id="KW-0325">Glycoprotein</keyword>
<keyword id="KW-0407">Ion channel</keyword>
<keyword id="KW-0406">Ion transport</keyword>
<keyword id="KW-1071">Ligand-gated ion channel</keyword>
<keyword id="KW-0472">Membrane</keyword>
<keyword id="KW-0597">Phosphoprotein</keyword>
<keyword id="KW-0675">Receptor</keyword>
<keyword id="KW-1185">Reference proteome</keyword>
<keyword id="KW-0732">Signal</keyword>
<keyword id="KW-0770">Synapse</keyword>
<keyword id="KW-0812">Transmembrane</keyword>
<keyword id="KW-1133">Transmembrane helix</keyword>
<keyword id="KW-0813">Transport</keyword>